<sequence>MEEIPVKVAKLEANGSETRGKMGNRGGLRGTFRIVEPNLQPADITEKTGNIGRTVKLQSNFTKFSVLRSEKFMMYDSVFSQVGLSPKVKLQFIVRVCQENKLPGAFCFDGRRLFTSEKWHGESDIQEFSHDEKKMTLRLVSTILPETEEYYQMINVLLNNLQVMLGQERIGKGYFLSPNITKDEVPRNSGPTFFETNSFKVLGGFGTTLQRGTKPTGELTTLLYIERINRVLNDNSVMKAYNRRSIDQLIGRDIITKYNNKTYRISEIKEMNVDEKFEMGGRTLSYAEYFKERYNIRLTQGDQPFVLTRVKKPMRRERKKKDEEGVEKEKEKEAPEEKDMTLNIPGELCFLCGFSDQEKSNMDLQKNLGCVLKREPRERLDDIPAYCNWIKNSDAATGMCNKWQLKIDNKPLEIEGRELPPCDVISGGSKINEKMGDDWKFGRVQFDIKRDRKHEIDVVIVDRNDFQYKNFMNDVEQELRNMRIDARVGKVNTCGPNDVERCLNDAARSGSGCAKMALVFVPDDRVYAKVKSFTMSTGLLTQCVTTRNGTNRNDKRRKVVSSKTVMQIFAKFGYDPWTVEIKLRPTMIVGMDTYHNKSSKKSIQASVFSINSTFTQYMSFVVNSPKGRQEFHETLGKNFNLALEDFKKRYDILPQRILVFRDGVGDNQLQFTKNFEVDAMKPLIENIYKGNGFPVPQIIYVIVKKRVGTKLFNRGNNPNPGTVVDKEIVKPNFYEFFLVSQRTTKGTATPTNYNVLEDTRLLTKKGTMDPMAPNELQKITYALTHLYFNWMGTIRVPVPVHYAHRLAELVGKVHKGSNPVAINERIRNRLFYL</sequence>
<keyword id="KW-0217">Developmental protein</keyword>
<keyword id="KW-0943">RNA-mediated gene silencing</keyword>
<protein>
    <recommendedName>
        <fullName>Piwi-like protein 2</fullName>
    </recommendedName>
    <alternativeName>
        <fullName>SMEDWI-2</fullName>
    </alternativeName>
</protein>
<proteinExistence type="evidence at transcript level"/>
<name>PIWI2_SCHMD</name>
<comment type="function">
    <text evidence="4">Required for the production of functional progeny from adult somatic stem cells (neoblasts).</text>
</comment>
<comment type="tissue specificity">
    <text evidence="4">Expressed in dividing adult stem cells.</text>
</comment>
<comment type="similarity">
    <text evidence="5">Belongs to the argonaute family. Piwi subfamily.</text>
</comment>
<evidence type="ECO:0000255" key="1">
    <source>
        <dbReference type="PROSITE-ProRule" id="PRU00142"/>
    </source>
</evidence>
<evidence type="ECO:0000255" key="2">
    <source>
        <dbReference type="PROSITE-ProRule" id="PRU00150"/>
    </source>
</evidence>
<evidence type="ECO:0000256" key="3">
    <source>
        <dbReference type="SAM" id="MobiDB-lite"/>
    </source>
</evidence>
<evidence type="ECO:0000269" key="4">
    <source>
    </source>
</evidence>
<evidence type="ECO:0000305" key="5"/>
<organism>
    <name type="scientific">Schmidtea mediterranea</name>
    <name type="common">Freshwater planarian flatworm</name>
    <dbReference type="NCBI Taxonomy" id="79327"/>
    <lineage>
        <taxon>Eukaryota</taxon>
        <taxon>Metazoa</taxon>
        <taxon>Spiralia</taxon>
        <taxon>Lophotrochozoa</taxon>
        <taxon>Platyhelminthes</taxon>
        <taxon>Rhabditophora</taxon>
        <taxon>Seriata</taxon>
        <taxon>Tricladida</taxon>
        <taxon>Continenticola</taxon>
        <taxon>Geoplanoidea</taxon>
        <taxon>Dugesiidae</taxon>
        <taxon>Schmidtea</taxon>
    </lineage>
</organism>
<accession>Q2Q5Y8</accession>
<dbReference type="EMBL" id="DQ186986">
    <property type="protein sequence ID" value="ABB77338.1"/>
    <property type="molecule type" value="mRNA"/>
</dbReference>
<dbReference type="SMR" id="Q2Q5Y8"/>
<dbReference type="GO" id="GO:0003723">
    <property type="term" value="F:RNA binding"/>
    <property type="evidence" value="ECO:0007669"/>
    <property type="project" value="InterPro"/>
</dbReference>
<dbReference type="GO" id="GO:0031047">
    <property type="term" value="P:regulatory ncRNA-mediated gene silencing"/>
    <property type="evidence" value="ECO:0007669"/>
    <property type="project" value="UniProtKB-KW"/>
</dbReference>
<dbReference type="CDD" id="cd04658">
    <property type="entry name" value="Piwi_piwi-like_Euk"/>
    <property type="match status" value="1"/>
</dbReference>
<dbReference type="Gene3D" id="3.40.50.2300">
    <property type="match status" value="1"/>
</dbReference>
<dbReference type="Gene3D" id="2.170.260.10">
    <property type="entry name" value="paz domain"/>
    <property type="match status" value="1"/>
</dbReference>
<dbReference type="Gene3D" id="3.30.420.10">
    <property type="entry name" value="Ribonuclease H-like superfamily/Ribonuclease H"/>
    <property type="match status" value="1"/>
</dbReference>
<dbReference type="InterPro" id="IPR003100">
    <property type="entry name" value="PAZ_dom"/>
</dbReference>
<dbReference type="InterPro" id="IPR036085">
    <property type="entry name" value="PAZ_dom_sf"/>
</dbReference>
<dbReference type="InterPro" id="IPR003165">
    <property type="entry name" value="Piwi"/>
</dbReference>
<dbReference type="InterPro" id="IPR012337">
    <property type="entry name" value="RNaseH-like_sf"/>
</dbReference>
<dbReference type="InterPro" id="IPR036397">
    <property type="entry name" value="RNaseH_sf"/>
</dbReference>
<dbReference type="PANTHER" id="PTHR22891">
    <property type="entry name" value="EUKARYOTIC TRANSLATION INITIATION FACTOR 2C"/>
    <property type="match status" value="1"/>
</dbReference>
<dbReference type="Pfam" id="PF02170">
    <property type="entry name" value="PAZ"/>
    <property type="match status" value="1"/>
</dbReference>
<dbReference type="Pfam" id="PF02171">
    <property type="entry name" value="Piwi"/>
    <property type="match status" value="1"/>
</dbReference>
<dbReference type="SMART" id="SM00949">
    <property type="entry name" value="PAZ"/>
    <property type="match status" value="1"/>
</dbReference>
<dbReference type="SMART" id="SM00950">
    <property type="entry name" value="Piwi"/>
    <property type="match status" value="1"/>
</dbReference>
<dbReference type="SUPFAM" id="SSF101690">
    <property type="entry name" value="PAZ domain"/>
    <property type="match status" value="1"/>
</dbReference>
<dbReference type="SUPFAM" id="SSF53098">
    <property type="entry name" value="Ribonuclease H-like"/>
    <property type="match status" value="1"/>
</dbReference>
<dbReference type="PROSITE" id="PS50821">
    <property type="entry name" value="PAZ"/>
    <property type="match status" value="1"/>
</dbReference>
<dbReference type="PROSITE" id="PS50822">
    <property type="entry name" value="PIWI"/>
    <property type="match status" value="1"/>
</dbReference>
<feature type="chain" id="PRO_0000227974" description="Piwi-like protein 2">
    <location>
        <begin position="1"/>
        <end position="833"/>
    </location>
</feature>
<feature type="domain" description="PAZ" evidence="1">
    <location>
        <begin position="227"/>
        <end position="353"/>
    </location>
</feature>
<feature type="domain" description="Piwi" evidence="2">
    <location>
        <begin position="515"/>
        <end position="815"/>
    </location>
</feature>
<feature type="region of interest" description="Disordered" evidence="3">
    <location>
        <begin position="313"/>
        <end position="338"/>
    </location>
</feature>
<feature type="compositionally biased region" description="Basic and acidic residues" evidence="3">
    <location>
        <begin position="320"/>
        <end position="338"/>
    </location>
</feature>
<gene>
    <name type="primary">wi-2</name>
</gene>
<reference key="1">
    <citation type="journal article" date="2005" name="Science">
        <title>SMEDWI-2 is a PIWI-like protein that regulates planarian stem cells.</title>
        <authorList>
            <person name="Reddien P.W."/>
            <person name="Oviedo N.J."/>
            <person name="Jennings J.R."/>
            <person name="Jenkin J.C."/>
            <person name="Sanchez Alvarado A."/>
        </authorList>
    </citation>
    <scope>NUCLEOTIDE SEQUENCE [MRNA]</scope>
    <scope>FUNCTION</scope>
    <scope>TISSUE SPECIFICITY</scope>
    <source>
        <strain>CIW4</strain>
    </source>
</reference>